<feature type="chain" id="PRO_0000302229" description="Large ribosomal subunit protein bL36">
    <location>
        <begin position="1"/>
        <end position="38"/>
    </location>
</feature>
<evidence type="ECO:0000255" key="1">
    <source>
        <dbReference type="HAMAP-Rule" id="MF_00251"/>
    </source>
</evidence>
<evidence type="ECO:0000305" key="2"/>
<protein>
    <recommendedName>
        <fullName evidence="1">Large ribosomal subunit protein bL36</fullName>
    </recommendedName>
    <alternativeName>
        <fullName evidence="2">50S ribosomal protein L36</fullName>
    </alternativeName>
</protein>
<keyword id="KW-0687">Ribonucleoprotein</keyword>
<keyword id="KW-0689">Ribosomal protein</keyword>
<comment type="similarity">
    <text evidence="1">Belongs to the bacterial ribosomal protein bL36 family.</text>
</comment>
<accession>Q02W48</accession>
<proteinExistence type="inferred from homology"/>
<gene>
    <name evidence="1" type="primary">rpmJ</name>
    <name type="ordered locus">LACR_2378</name>
</gene>
<organism>
    <name type="scientific">Lactococcus lactis subsp. cremoris (strain SK11)</name>
    <dbReference type="NCBI Taxonomy" id="272622"/>
    <lineage>
        <taxon>Bacteria</taxon>
        <taxon>Bacillati</taxon>
        <taxon>Bacillota</taxon>
        <taxon>Bacilli</taxon>
        <taxon>Lactobacillales</taxon>
        <taxon>Streptococcaceae</taxon>
        <taxon>Lactococcus</taxon>
        <taxon>Lactococcus cremoris subsp. cremoris</taxon>
    </lineage>
</organism>
<reference key="1">
    <citation type="journal article" date="2006" name="Proc. Natl. Acad. Sci. U.S.A.">
        <title>Comparative genomics of the lactic acid bacteria.</title>
        <authorList>
            <person name="Makarova K.S."/>
            <person name="Slesarev A."/>
            <person name="Wolf Y.I."/>
            <person name="Sorokin A."/>
            <person name="Mirkin B."/>
            <person name="Koonin E.V."/>
            <person name="Pavlov A."/>
            <person name="Pavlova N."/>
            <person name="Karamychev V."/>
            <person name="Polouchine N."/>
            <person name="Shakhova V."/>
            <person name="Grigoriev I."/>
            <person name="Lou Y."/>
            <person name="Rohksar D."/>
            <person name="Lucas S."/>
            <person name="Huang K."/>
            <person name="Goodstein D.M."/>
            <person name="Hawkins T."/>
            <person name="Plengvidhya V."/>
            <person name="Welker D."/>
            <person name="Hughes J."/>
            <person name="Goh Y."/>
            <person name="Benson A."/>
            <person name="Baldwin K."/>
            <person name="Lee J.-H."/>
            <person name="Diaz-Muniz I."/>
            <person name="Dosti B."/>
            <person name="Smeianov V."/>
            <person name="Wechter W."/>
            <person name="Barabote R."/>
            <person name="Lorca G."/>
            <person name="Altermann E."/>
            <person name="Barrangou R."/>
            <person name="Ganesan B."/>
            <person name="Xie Y."/>
            <person name="Rawsthorne H."/>
            <person name="Tamir D."/>
            <person name="Parker C."/>
            <person name="Breidt F."/>
            <person name="Broadbent J.R."/>
            <person name="Hutkins R."/>
            <person name="O'Sullivan D."/>
            <person name="Steele J."/>
            <person name="Unlu G."/>
            <person name="Saier M.H. Jr."/>
            <person name="Klaenhammer T."/>
            <person name="Richardson P."/>
            <person name="Kozyavkin S."/>
            <person name="Weimer B.C."/>
            <person name="Mills D.A."/>
        </authorList>
    </citation>
    <scope>NUCLEOTIDE SEQUENCE [LARGE SCALE GENOMIC DNA]</scope>
    <source>
        <strain>SK11</strain>
    </source>
</reference>
<dbReference type="EMBL" id="CP000425">
    <property type="protein sequence ID" value="ABJ73824.1"/>
    <property type="molecule type" value="Genomic_DNA"/>
</dbReference>
<dbReference type="RefSeq" id="WP_001808836.1">
    <property type="nucleotide sequence ID" value="NC_008527.1"/>
</dbReference>
<dbReference type="SMR" id="Q02W48"/>
<dbReference type="GeneID" id="93964224"/>
<dbReference type="KEGG" id="llc:LACR_2378"/>
<dbReference type="HOGENOM" id="CLU_135723_6_2_9"/>
<dbReference type="Proteomes" id="UP000000240">
    <property type="component" value="Chromosome"/>
</dbReference>
<dbReference type="GO" id="GO:0005737">
    <property type="term" value="C:cytoplasm"/>
    <property type="evidence" value="ECO:0007669"/>
    <property type="project" value="UniProtKB-ARBA"/>
</dbReference>
<dbReference type="GO" id="GO:1990904">
    <property type="term" value="C:ribonucleoprotein complex"/>
    <property type="evidence" value="ECO:0007669"/>
    <property type="project" value="UniProtKB-KW"/>
</dbReference>
<dbReference type="GO" id="GO:0005840">
    <property type="term" value="C:ribosome"/>
    <property type="evidence" value="ECO:0007669"/>
    <property type="project" value="UniProtKB-KW"/>
</dbReference>
<dbReference type="GO" id="GO:0003735">
    <property type="term" value="F:structural constituent of ribosome"/>
    <property type="evidence" value="ECO:0007669"/>
    <property type="project" value="InterPro"/>
</dbReference>
<dbReference type="GO" id="GO:0006412">
    <property type="term" value="P:translation"/>
    <property type="evidence" value="ECO:0007669"/>
    <property type="project" value="UniProtKB-UniRule"/>
</dbReference>
<dbReference type="HAMAP" id="MF_00251">
    <property type="entry name" value="Ribosomal_bL36"/>
    <property type="match status" value="1"/>
</dbReference>
<dbReference type="InterPro" id="IPR000473">
    <property type="entry name" value="Ribosomal_bL36"/>
</dbReference>
<dbReference type="InterPro" id="IPR035977">
    <property type="entry name" value="Ribosomal_bL36_sp"/>
</dbReference>
<dbReference type="NCBIfam" id="TIGR01022">
    <property type="entry name" value="rpmJ_bact"/>
    <property type="match status" value="1"/>
</dbReference>
<dbReference type="PANTHER" id="PTHR42888">
    <property type="entry name" value="50S RIBOSOMAL PROTEIN L36, CHLOROPLASTIC"/>
    <property type="match status" value="1"/>
</dbReference>
<dbReference type="PANTHER" id="PTHR42888:SF1">
    <property type="entry name" value="LARGE RIBOSOMAL SUBUNIT PROTEIN BL36C"/>
    <property type="match status" value="1"/>
</dbReference>
<dbReference type="Pfam" id="PF00444">
    <property type="entry name" value="Ribosomal_L36"/>
    <property type="match status" value="1"/>
</dbReference>
<dbReference type="SUPFAM" id="SSF57840">
    <property type="entry name" value="Ribosomal protein L36"/>
    <property type="match status" value="1"/>
</dbReference>
<dbReference type="PROSITE" id="PS00828">
    <property type="entry name" value="RIBOSOMAL_L36"/>
    <property type="match status" value="1"/>
</dbReference>
<sequence>MKVRPSVKPICEYCKVIRRNGRVMVICPANPKHKQRQG</sequence>
<name>RL36_LACLS</name>